<reference key="1">
    <citation type="journal article" date="2011" name="J. Bacteriol.">
        <title>Comparative genomics of 28 Salmonella enterica isolates: evidence for CRISPR-mediated adaptive sublineage evolution.</title>
        <authorList>
            <person name="Fricke W.F."/>
            <person name="Mammel M.K."/>
            <person name="McDermott P.F."/>
            <person name="Tartera C."/>
            <person name="White D.G."/>
            <person name="Leclerc J.E."/>
            <person name="Ravel J."/>
            <person name="Cebula T.A."/>
        </authorList>
    </citation>
    <scope>NUCLEOTIDE SEQUENCE [LARGE SCALE GENOMIC DNA]</scope>
    <source>
        <strain>CVM19633</strain>
    </source>
</reference>
<evidence type="ECO:0000255" key="1">
    <source>
        <dbReference type="HAMAP-Rule" id="MF_00017"/>
    </source>
</evidence>
<organism>
    <name type="scientific">Salmonella schwarzengrund (strain CVM19633)</name>
    <dbReference type="NCBI Taxonomy" id="439843"/>
    <lineage>
        <taxon>Bacteria</taxon>
        <taxon>Pseudomonadati</taxon>
        <taxon>Pseudomonadota</taxon>
        <taxon>Gammaproteobacteria</taxon>
        <taxon>Enterobacterales</taxon>
        <taxon>Enterobacteriaceae</taxon>
        <taxon>Salmonella</taxon>
    </lineage>
</organism>
<dbReference type="EMBL" id="CP001127">
    <property type="protein sequence ID" value="ACF90331.1"/>
    <property type="molecule type" value="Genomic_DNA"/>
</dbReference>
<dbReference type="RefSeq" id="WP_001195023.1">
    <property type="nucleotide sequence ID" value="NC_011094.1"/>
</dbReference>
<dbReference type="SMR" id="B4TMG4"/>
<dbReference type="KEGG" id="sew:SeSA_A0547"/>
<dbReference type="HOGENOM" id="CLU_060739_1_2_6"/>
<dbReference type="Proteomes" id="UP000001865">
    <property type="component" value="Chromosome"/>
</dbReference>
<dbReference type="GO" id="GO:0003677">
    <property type="term" value="F:DNA binding"/>
    <property type="evidence" value="ECO:0007669"/>
    <property type="project" value="UniProtKB-UniRule"/>
</dbReference>
<dbReference type="GO" id="GO:0008270">
    <property type="term" value="F:zinc ion binding"/>
    <property type="evidence" value="ECO:0007669"/>
    <property type="project" value="UniProtKB-KW"/>
</dbReference>
<dbReference type="GO" id="GO:0006310">
    <property type="term" value="P:DNA recombination"/>
    <property type="evidence" value="ECO:0007669"/>
    <property type="project" value="UniProtKB-UniRule"/>
</dbReference>
<dbReference type="GO" id="GO:0006281">
    <property type="term" value="P:DNA repair"/>
    <property type="evidence" value="ECO:0007669"/>
    <property type="project" value="UniProtKB-UniRule"/>
</dbReference>
<dbReference type="CDD" id="cd01025">
    <property type="entry name" value="TOPRIM_recR"/>
    <property type="match status" value="1"/>
</dbReference>
<dbReference type="FunFam" id="1.10.8.420:FF:000001">
    <property type="entry name" value="Recombination protein RecR"/>
    <property type="match status" value="1"/>
</dbReference>
<dbReference type="FunFam" id="3.40.1360.10:FF:000001">
    <property type="entry name" value="Recombination protein RecR"/>
    <property type="match status" value="1"/>
</dbReference>
<dbReference type="Gene3D" id="3.40.1360.10">
    <property type="match status" value="1"/>
</dbReference>
<dbReference type="Gene3D" id="6.10.250.240">
    <property type="match status" value="1"/>
</dbReference>
<dbReference type="Gene3D" id="1.10.8.420">
    <property type="entry name" value="RecR Domain 1"/>
    <property type="match status" value="1"/>
</dbReference>
<dbReference type="HAMAP" id="MF_00017">
    <property type="entry name" value="RecR"/>
    <property type="match status" value="1"/>
</dbReference>
<dbReference type="InterPro" id="IPR000093">
    <property type="entry name" value="DNA_Rcmb_RecR"/>
</dbReference>
<dbReference type="InterPro" id="IPR023627">
    <property type="entry name" value="Rcmb_RecR"/>
</dbReference>
<dbReference type="InterPro" id="IPR015967">
    <property type="entry name" value="Rcmb_RecR_Znf"/>
</dbReference>
<dbReference type="InterPro" id="IPR006171">
    <property type="entry name" value="TOPRIM_dom"/>
</dbReference>
<dbReference type="InterPro" id="IPR034137">
    <property type="entry name" value="TOPRIM_RecR"/>
</dbReference>
<dbReference type="NCBIfam" id="TIGR00615">
    <property type="entry name" value="recR"/>
    <property type="match status" value="1"/>
</dbReference>
<dbReference type="PANTHER" id="PTHR30446">
    <property type="entry name" value="RECOMBINATION PROTEIN RECR"/>
    <property type="match status" value="1"/>
</dbReference>
<dbReference type="PANTHER" id="PTHR30446:SF0">
    <property type="entry name" value="RECOMBINATION PROTEIN RECR"/>
    <property type="match status" value="1"/>
</dbReference>
<dbReference type="Pfam" id="PF21175">
    <property type="entry name" value="RecR_C"/>
    <property type="match status" value="1"/>
</dbReference>
<dbReference type="Pfam" id="PF21176">
    <property type="entry name" value="RecR_HhH"/>
    <property type="match status" value="1"/>
</dbReference>
<dbReference type="Pfam" id="PF02132">
    <property type="entry name" value="RecR_ZnF"/>
    <property type="match status" value="1"/>
</dbReference>
<dbReference type="Pfam" id="PF13662">
    <property type="entry name" value="Toprim_4"/>
    <property type="match status" value="1"/>
</dbReference>
<dbReference type="SMART" id="SM00493">
    <property type="entry name" value="TOPRIM"/>
    <property type="match status" value="1"/>
</dbReference>
<dbReference type="SUPFAM" id="SSF111304">
    <property type="entry name" value="Recombination protein RecR"/>
    <property type="match status" value="1"/>
</dbReference>
<dbReference type="PROSITE" id="PS01300">
    <property type="entry name" value="RECR"/>
    <property type="match status" value="1"/>
</dbReference>
<dbReference type="PROSITE" id="PS50880">
    <property type="entry name" value="TOPRIM"/>
    <property type="match status" value="1"/>
</dbReference>
<feature type="chain" id="PRO_1000089769" description="Recombination protein RecR">
    <location>
        <begin position="1"/>
        <end position="201"/>
    </location>
</feature>
<feature type="domain" description="Toprim" evidence="1">
    <location>
        <begin position="81"/>
        <end position="176"/>
    </location>
</feature>
<feature type="zinc finger region" description="C4-type" evidence="1">
    <location>
        <begin position="57"/>
        <end position="72"/>
    </location>
</feature>
<protein>
    <recommendedName>
        <fullName evidence="1">Recombination protein RecR</fullName>
    </recommendedName>
</protein>
<accession>B4TMG4</accession>
<sequence length="201" mass="21715">MQTSPLLTQLMEALRCLPGVGPKSAQRMAFTLLQRDRSGGMRLAQALTRAMSEIGHCADCRTFTEQDVCNICSNPRRQENGQICVVESPADIYAIEQTGQFSGRYFVLMGHLSPLDGIGPDDIGLDRLEQRLASEKISELILATNPTVEGEATANYIAELCAEAGVEASRIAHGVPVGGELEMVDGTTLSHSLAGRHKIIF</sequence>
<proteinExistence type="inferred from homology"/>
<keyword id="KW-0227">DNA damage</keyword>
<keyword id="KW-0233">DNA recombination</keyword>
<keyword id="KW-0234">DNA repair</keyword>
<keyword id="KW-0479">Metal-binding</keyword>
<keyword id="KW-0862">Zinc</keyword>
<keyword id="KW-0863">Zinc-finger</keyword>
<gene>
    <name evidence="1" type="primary">recR</name>
    <name type="ordered locus">SeSA_A0547</name>
</gene>
<comment type="function">
    <text evidence="1">May play a role in DNA repair. It seems to be involved in an RecBC-independent recombinational process of DNA repair. It may act with RecF and RecO.</text>
</comment>
<comment type="similarity">
    <text evidence="1">Belongs to the RecR family.</text>
</comment>
<name>RECR_SALSV</name>